<proteinExistence type="evidence at transcript level"/>
<name>DMD10_CAEEL</name>
<reference evidence="8" key="1">
    <citation type="journal article" date="1998" name="Science">
        <title>Genome sequence of the nematode C. elegans: a platform for investigating biology.</title>
        <authorList>
            <consortium name="The C. elegans sequencing consortium"/>
        </authorList>
    </citation>
    <scope>NUCLEOTIDE SEQUENCE [LARGE SCALE GENOMIC DNA]</scope>
    <source>
        <strain evidence="8">Bristol N2</strain>
    </source>
</reference>
<reference key="2">
    <citation type="journal article" date="2016" name="Nature">
        <title>Sex-specific pruning of neuronal synapses in Caenorhabditis elegans.</title>
        <authorList>
            <person name="Oren-Suissa M."/>
            <person name="Bayer E.A."/>
            <person name="Hobert O."/>
        </authorList>
    </citation>
    <scope>FUNCTION</scope>
    <scope>TISSUE SPECIFICITY</scope>
    <scope>DISRUPTION PHENOTYPE</scope>
</reference>
<reference evidence="7" key="3">
    <citation type="journal article" date="2021" name="PeerJ">
        <title>The Doublesex/Mab-3 domain transcription factor DMD-10 regulates ASH-dependent behavioral responses.</title>
        <authorList>
            <person name="Durbeck J."/>
            <person name="Breton C."/>
            <person name="Suter M."/>
            <person name="Luth E.S."/>
            <person name="McGehee A.M."/>
        </authorList>
    </citation>
    <scope>FUNCTION</scope>
    <scope>DISRUPTION PHENOTYPE</scope>
</reference>
<comment type="function">
    <text evidence="1 4 5">Transcription factor (By similarity). Plays a role in neuronal signaling in polymodal sensory neuron ASH, downstream of sensory receptor activation (PubMed:33665029). Required for maintenance of AVG synapses (PubMed:27144354).</text>
</comment>
<comment type="subcellular location">
    <subcellularLocation>
        <location evidence="2">Nucleus</location>
    </subcellularLocation>
</comment>
<comment type="tissue specificity">
    <text evidence="4">Dimorphically expressed in the dimorphically connected interneuron AVG; expression is observed in the AVG in males, but not in hermaphrodites.</text>
</comment>
<comment type="disruption phenotype">
    <text evidence="4 5">Decreased response to nose touch, but normal motor and sensory behaviors and normal levels of glutamate receptor glr-1 (PubMed:33665029). Small but significant decrease in response to high osmolarity (PubMed:33665029). Decreased reversal responses to direct stimulation of the polymodal sensory neuron ASH as compared to wild type (PubMed:33665029). Defects in male mating behavior; reduced efficiency in locating vulva of partner (PubMed:27144354). Alterations in AVG interneuron synaptic wiring in a dmd-5 mutant background (PubMed:27144354).</text>
</comment>
<comment type="similarity">
    <text evidence="7">Belongs to the DMRT family.</text>
</comment>
<dbReference type="EMBL" id="BX284605">
    <property type="protein sequence ID" value="CAB01491.3"/>
    <property type="molecule type" value="Genomic_DNA"/>
</dbReference>
<dbReference type="RefSeq" id="NP_001379162.1">
    <property type="nucleotide sequence ID" value="NM_001392638.1"/>
</dbReference>
<dbReference type="RefSeq" id="NP_506288.2">
    <property type="nucleotide sequence ID" value="NM_073887.3"/>
</dbReference>
<dbReference type="SMR" id="G5EEJ1"/>
<dbReference type="FunCoup" id="G5EEJ1">
    <property type="interactions" value="320"/>
</dbReference>
<dbReference type="STRING" id="6239.C34D1.1.1"/>
<dbReference type="PaxDb" id="6239-C34D1.1"/>
<dbReference type="EnsemblMetazoa" id="C34D1.1.1">
    <property type="protein sequence ID" value="C34D1.1.1"/>
    <property type="gene ID" value="WBGene00007929"/>
</dbReference>
<dbReference type="GeneID" id="183202"/>
<dbReference type="AGR" id="WB:WBGene00007929"/>
<dbReference type="WormBase" id="C34D1.1">
    <property type="protein sequence ID" value="CE54228"/>
    <property type="gene ID" value="WBGene00007929"/>
    <property type="gene designation" value="dmd-10"/>
</dbReference>
<dbReference type="eggNOG" id="KOG3815">
    <property type="taxonomic scope" value="Eukaryota"/>
</dbReference>
<dbReference type="HOGENOM" id="CLU_973992_0_0_1"/>
<dbReference type="InParanoid" id="G5EEJ1"/>
<dbReference type="OrthoDB" id="5849055at2759"/>
<dbReference type="PRO" id="PR:G5EEJ1"/>
<dbReference type="Proteomes" id="UP000001940">
    <property type="component" value="Chromosome V"/>
</dbReference>
<dbReference type="Bgee" id="WBGene00007929">
    <property type="expression patterns" value="Expressed in pharyngeal muscle cell (C elegans) and 3 other cell types or tissues"/>
</dbReference>
<dbReference type="GO" id="GO:0005634">
    <property type="term" value="C:nucleus"/>
    <property type="evidence" value="ECO:0000318"/>
    <property type="project" value="GO_Central"/>
</dbReference>
<dbReference type="GO" id="GO:0000981">
    <property type="term" value="F:DNA-binding transcription factor activity, RNA polymerase II-specific"/>
    <property type="evidence" value="ECO:0000318"/>
    <property type="project" value="GO_Central"/>
</dbReference>
<dbReference type="GO" id="GO:0046872">
    <property type="term" value="F:metal ion binding"/>
    <property type="evidence" value="ECO:0007669"/>
    <property type="project" value="UniProtKB-KW"/>
</dbReference>
<dbReference type="GO" id="GO:0000978">
    <property type="term" value="F:RNA polymerase II cis-regulatory region sequence-specific DNA binding"/>
    <property type="evidence" value="ECO:0000318"/>
    <property type="project" value="GO_Central"/>
</dbReference>
<dbReference type="GO" id="GO:0090598">
    <property type="term" value="P:male anatomical structure morphogenesis"/>
    <property type="evidence" value="ECO:0000316"/>
    <property type="project" value="UniProtKB"/>
</dbReference>
<dbReference type="GO" id="GO:0007638">
    <property type="term" value="P:mechanosensory behavior"/>
    <property type="evidence" value="ECO:0000315"/>
    <property type="project" value="UniProtKB"/>
</dbReference>
<dbReference type="GO" id="GO:1905807">
    <property type="term" value="P:negative regulation of synapse pruning"/>
    <property type="evidence" value="ECO:0000316"/>
    <property type="project" value="UniProtKB"/>
</dbReference>
<dbReference type="GO" id="GO:0006357">
    <property type="term" value="P:regulation of transcription by RNA polymerase II"/>
    <property type="evidence" value="ECO:0000318"/>
    <property type="project" value="GO_Central"/>
</dbReference>
<dbReference type="GO" id="GO:0006970">
    <property type="term" value="P:response to osmotic stress"/>
    <property type="evidence" value="ECO:0000315"/>
    <property type="project" value="UniProtKB"/>
</dbReference>
<dbReference type="GO" id="GO:0007548">
    <property type="term" value="P:sex differentiation"/>
    <property type="evidence" value="ECO:0000318"/>
    <property type="project" value="GO_Central"/>
</dbReference>
<dbReference type="FunFam" id="4.10.1040.10:FF:000001">
    <property type="entry name" value="doublesex- and mab-3-related transcription factor 1"/>
    <property type="match status" value="1"/>
</dbReference>
<dbReference type="Gene3D" id="4.10.1040.10">
    <property type="entry name" value="DM DNA-binding domain"/>
    <property type="match status" value="2"/>
</dbReference>
<dbReference type="InterPro" id="IPR001275">
    <property type="entry name" value="DM_DNA-bd"/>
</dbReference>
<dbReference type="InterPro" id="IPR036407">
    <property type="entry name" value="DM_DNA-bd_sf"/>
</dbReference>
<dbReference type="InterPro" id="IPR026607">
    <property type="entry name" value="DMRT"/>
</dbReference>
<dbReference type="PANTHER" id="PTHR12322">
    <property type="entry name" value="DOUBLESEX AND MAB-3 RELATED TRANSCRIPTION FACTOR DMRT"/>
    <property type="match status" value="1"/>
</dbReference>
<dbReference type="PANTHER" id="PTHR12322:SF116">
    <property type="entry name" value="DOUBLESEX-MAB RELATED 99B"/>
    <property type="match status" value="1"/>
</dbReference>
<dbReference type="Pfam" id="PF00751">
    <property type="entry name" value="DM"/>
    <property type="match status" value="2"/>
</dbReference>
<dbReference type="SMART" id="SM00301">
    <property type="entry name" value="DM"/>
    <property type="match status" value="2"/>
</dbReference>
<dbReference type="SUPFAM" id="SSF82927">
    <property type="entry name" value="Cysteine-rich DNA binding domain, (DM domain)"/>
    <property type="match status" value="2"/>
</dbReference>
<dbReference type="PROSITE" id="PS40000">
    <property type="entry name" value="DM_1"/>
    <property type="match status" value="2"/>
</dbReference>
<dbReference type="PROSITE" id="PS50809">
    <property type="entry name" value="DM_2"/>
    <property type="match status" value="2"/>
</dbReference>
<accession>G5EEJ1</accession>
<keyword id="KW-0238">DNA-binding</keyword>
<keyword id="KW-0479">Metal-binding</keyword>
<keyword id="KW-0539">Nucleus</keyword>
<keyword id="KW-1185">Reference proteome</keyword>
<keyword id="KW-0677">Repeat</keyword>
<keyword id="KW-0804">Transcription</keyword>
<keyword id="KW-0805">Transcription regulation</keyword>
<keyword id="KW-0862">Zinc</keyword>
<feature type="chain" id="PRO_0000453457" description="Doublesex- and mab-3-related transcription factor dmd-10">
    <location>
        <begin position="1"/>
        <end position="348"/>
    </location>
</feature>
<feature type="DNA-binding region" description="DM 1" evidence="2">
    <location>
        <begin position="43"/>
        <end position="91"/>
    </location>
</feature>
<feature type="DNA-binding region" description="DM 2" evidence="2">
    <location>
        <begin position="119"/>
        <end position="166"/>
    </location>
</feature>
<feature type="region of interest" description="Disordered" evidence="3">
    <location>
        <begin position="316"/>
        <end position="348"/>
    </location>
</feature>
<sequence>MVADVLRQSVLVPISMYPQYPVPRRYTTSVFKEYQKKKKIYYCQRCLNHDVPRPRKNHKCECPYADCTCEKCGLVEKRRILNIRLQNYNQFNIENENDSKLIIVEDDDKKKQGERVPNCQKCGQHGRKSRLKGHKRSCPFRECPCAKCAVVSERQKLMADQIKIRRRQRKDTLLTFAKNSITSTMFPSNQISLNALNSLLYGSINTSPQPLLSSPTSSDASSCSPSMPFTPSIPMFMPTSADCSPTTQTPTSSIPSSIASTSPLMTSLPLRLSGFPLLNIRDPSAEASLLNLGCNADAAALLKTILDQYRMLEEASMSMSSSPSKDDESGDEDSDGLNSNSIIDVITV</sequence>
<organism evidence="8">
    <name type="scientific">Caenorhabditis elegans</name>
    <dbReference type="NCBI Taxonomy" id="6239"/>
    <lineage>
        <taxon>Eukaryota</taxon>
        <taxon>Metazoa</taxon>
        <taxon>Ecdysozoa</taxon>
        <taxon>Nematoda</taxon>
        <taxon>Chromadorea</taxon>
        <taxon>Rhabditida</taxon>
        <taxon>Rhabditina</taxon>
        <taxon>Rhabditomorpha</taxon>
        <taxon>Rhabditoidea</taxon>
        <taxon>Rhabditidae</taxon>
        <taxon>Peloderinae</taxon>
        <taxon>Caenorhabditis</taxon>
    </lineage>
</organism>
<evidence type="ECO:0000250" key="1">
    <source>
        <dbReference type="UniProtKB" id="Q9QZ59"/>
    </source>
</evidence>
<evidence type="ECO:0000255" key="2">
    <source>
        <dbReference type="PROSITE-ProRule" id="PRU00070"/>
    </source>
</evidence>
<evidence type="ECO:0000256" key="3">
    <source>
        <dbReference type="SAM" id="MobiDB-lite"/>
    </source>
</evidence>
<evidence type="ECO:0000269" key="4">
    <source>
    </source>
</evidence>
<evidence type="ECO:0000269" key="5">
    <source>
    </source>
</evidence>
<evidence type="ECO:0000303" key="6">
    <source>
    </source>
</evidence>
<evidence type="ECO:0000305" key="7"/>
<evidence type="ECO:0000312" key="8">
    <source>
        <dbReference type="Proteomes" id="UP000001940"/>
    </source>
</evidence>
<evidence type="ECO:0000312" key="9">
    <source>
        <dbReference type="WormBase" id="C34D1.1"/>
    </source>
</evidence>
<protein>
    <recommendedName>
        <fullName evidence="6">Doublesex- and mab-3-related transcription factor dmd-10</fullName>
    </recommendedName>
</protein>
<gene>
    <name evidence="9" type="primary">dmd-10</name>
    <name evidence="9" type="synonym">dmd-11</name>
    <name evidence="9" type="ORF">C34D1.1</name>
</gene>